<proteinExistence type="inferred from homology"/>
<dbReference type="EMBL" id="DQ673255">
    <property type="protein sequence ID" value="ABG74624.1"/>
    <property type="molecule type" value="Genomic_DNA"/>
</dbReference>
<dbReference type="RefSeq" id="YP_778486.1">
    <property type="nucleotide sequence ID" value="NC_008407.1"/>
</dbReference>
<dbReference type="SMR" id="Q06RD5"/>
<dbReference type="GeneID" id="4319816"/>
<dbReference type="GO" id="GO:0009535">
    <property type="term" value="C:chloroplast thylakoid membrane"/>
    <property type="evidence" value="ECO:0007669"/>
    <property type="project" value="UniProtKB-SubCell"/>
</dbReference>
<dbReference type="GO" id="GO:0009523">
    <property type="term" value="C:photosystem II"/>
    <property type="evidence" value="ECO:0007669"/>
    <property type="project" value="UniProtKB-KW"/>
</dbReference>
<dbReference type="GO" id="GO:0016168">
    <property type="term" value="F:chlorophyll binding"/>
    <property type="evidence" value="ECO:0007669"/>
    <property type="project" value="UniProtKB-UniRule"/>
</dbReference>
<dbReference type="GO" id="GO:0045156">
    <property type="term" value="F:electron transporter, transferring electrons within the cyclic electron transport pathway of photosynthesis activity"/>
    <property type="evidence" value="ECO:0007669"/>
    <property type="project" value="InterPro"/>
</dbReference>
<dbReference type="GO" id="GO:0046872">
    <property type="term" value="F:metal ion binding"/>
    <property type="evidence" value="ECO:0007669"/>
    <property type="project" value="UniProtKB-KW"/>
</dbReference>
<dbReference type="GO" id="GO:0009772">
    <property type="term" value="P:photosynthetic electron transport in photosystem II"/>
    <property type="evidence" value="ECO:0007669"/>
    <property type="project" value="InterPro"/>
</dbReference>
<dbReference type="FunFam" id="1.10.10.670:FF:000001">
    <property type="entry name" value="Photosystem II CP43 reaction center protein"/>
    <property type="match status" value="1"/>
</dbReference>
<dbReference type="Gene3D" id="1.10.10.670">
    <property type="entry name" value="photosystem ii from thermosynechococcus elongatus"/>
    <property type="match status" value="1"/>
</dbReference>
<dbReference type="HAMAP" id="MF_01496">
    <property type="entry name" value="PSII_PsbC_CP43"/>
    <property type="match status" value="1"/>
</dbReference>
<dbReference type="InterPro" id="IPR000932">
    <property type="entry name" value="PS_antenna-like"/>
</dbReference>
<dbReference type="InterPro" id="IPR036001">
    <property type="entry name" value="PS_II_antenna-like_sf"/>
</dbReference>
<dbReference type="InterPro" id="IPR005869">
    <property type="entry name" value="PSII_PsbC"/>
</dbReference>
<dbReference type="InterPro" id="IPR044900">
    <property type="entry name" value="PSII_PsbC_sf"/>
</dbReference>
<dbReference type="NCBIfam" id="TIGR01153">
    <property type="entry name" value="psbC"/>
    <property type="match status" value="1"/>
</dbReference>
<dbReference type="Pfam" id="PF00421">
    <property type="entry name" value="PSII"/>
    <property type="match status" value="1"/>
</dbReference>
<dbReference type="SUPFAM" id="SSF161077">
    <property type="entry name" value="Photosystem II antenna protein-like"/>
    <property type="match status" value="1"/>
</dbReference>
<keyword id="KW-0007">Acetylation</keyword>
<keyword id="KW-0148">Chlorophyll</keyword>
<keyword id="KW-0150">Chloroplast</keyword>
<keyword id="KW-0157">Chromophore</keyword>
<keyword id="KW-0464">Manganese</keyword>
<keyword id="KW-0472">Membrane</keyword>
<keyword id="KW-0479">Metal-binding</keyword>
<keyword id="KW-0597">Phosphoprotein</keyword>
<keyword id="KW-0602">Photosynthesis</keyword>
<keyword id="KW-0604">Photosystem II</keyword>
<keyword id="KW-0934">Plastid</keyword>
<keyword id="KW-0793">Thylakoid</keyword>
<keyword id="KW-0812">Transmembrane</keyword>
<keyword id="KW-1133">Transmembrane helix</keyword>
<feature type="propeptide" id="PRO_0000431155" evidence="1">
    <location>
        <begin position="1"/>
        <end position="14"/>
    </location>
</feature>
<feature type="chain" id="PRO_0000361402" description="Photosystem II CP43 reaction center protein" evidence="1">
    <location>
        <begin position="15"/>
        <end position="473"/>
    </location>
</feature>
<feature type="transmembrane region" description="Helical" evidence="1">
    <location>
        <begin position="69"/>
        <end position="93"/>
    </location>
</feature>
<feature type="transmembrane region" description="Helical" evidence="1">
    <location>
        <begin position="134"/>
        <end position="155"/>
    </location>
</feature>
<feature type="transmembrane region" description="Helical" evidence="1">
    <location>
        <begin position="178"/>
        <end position="200"/>
    </location>
</feature>
<feature type="transmembrane region" description="Helical" evidence="1">
    <location>
        <begin position="255"/>
        <end position="275"/>
    </location>
</feature>
<feature type="transmembrane region" description="Helical" evidence="1">
    <location>
        <begin position="291"/>
        <end position="312"/>
    </location>
</feature>
<feature type="transmembrane region" description="Helical" evidence="1">
    <location>
        <begin position="447"/>
        <end position="471"/>
    </location>
</feature>
<feature type="binding site" evidence="1">
    <location>
        <position position="367"/>
    </location>
    <ligand>
        <name>[CaMn4O5] cluster</name>
        <dbReference type="ChEBI" id="CHEBI:189552"/>
    </ligand>
</feature>
<feature type="modified residue" description="N-acetylthreonine" evidence="1">
    <location>
        <position position="15"/>
    </location>
</feature>
<feature type="modified residue" description="Phosphothreonine" evidence="1">
    <location>
        <position position="15"/>
    </location>
</feature>
<protein>
    <recommendedName>
        <fullName evidence="1">Photosystem II CP43 reaction center protein</fullName>
    </recommendedName>
    <alternativeName>
        <fullName evidence="1">PSII 43 kDa protein</fullName>
    </alternativeName>
    <alternativeName>
        <fullName evidence="1">Protein CP-43</fullName>
    </alternativeName>
</protein>
<evidence type="ECO:0000255" key="1">
    <source>
        <dbReference type="HAMAP-Rule" id="MF_01496"/>
    </source>
</evidence>
<comment type="function">
    <text evidence="1">One of the components of the core complex of photosystem II (PSII). It binds chlorophyll and helps catalyze the primary light-induced photochemical processes of PSII. PSII is a light-driven water:plastoquinone oxidoreductase, using light energy to abstract electrons from H(2)O, generating O(2) and a proton gradient subsequently used for ATP formation.</text>
</comment>
<comment type="cofactor">
    <text evidence="1">Binds multiple chlorophylls and provides some of the ligands for the Ca-4Mn-5O cluster of the oxygen-evolving complex. It may also provide a ligand for a Cl- that is required for oxygen evolution. PSII binds additional chlorophylls, carotenoids and specific lipids.</text>
</comment>
<comment type="subunit">
    <text evidence="1">PSII is composed of 1 copy each of membrane proteins PsbA, PsbB, PsbC, PsbD, PsbE, PsbF, PsbH, PsbI, PsbJ, PsbK, PsbL, PsbM, PsbT, PsbX, PsbY, PsbZ, Psb30/Ycf12, at least 3 peripheral proteins of the oxygen-evolving complex and a large number of cofactors. It forms dimeric complexes.</text>
</comment>
<comment type="subcellular location">
    <subcellularLocation>
        <location evidence="1">Plastid</location>
        <location evidence="1">Chloroplast thylakoid membrane</location>
        <topology evidence="1">Multi-pass membrane protein</topology>
    </subcellularLocation>
</comment>
<comment type="similarity">
    <text evidence="1">Belongs to the PsbB/PsbC family. PsbC subfamily.</text>
</comment>
<gene>
    <name evidence="1" type="primary">psbC</name>
    <name type="ORF">JNC0364</name>
</gene>
<reference key="1">
    <citation type="journal article" date="2007" name="Mol. Biol. Evol.">
        <title>Gene relocations within chloroplast genomes of Jasminum and Menodora (Oleaceae) are due to multiple, overlapping inversions.</title>
        <authorList>
            <person name="Lee H.-L."/>
            <person name="Jansen R.K."/>
            <person name="Chumley T.W."/>
            <person name="Kim K.-J."/>
        </authorList>
    </citation>
    <scope>NUCLEOTIDE SEQUENCE [LARGE SCALE GENOMIC DNA]</scope>
</reference>
<name>PSBC_JASNU</name>
<sequence>MKTLYSLRRFYHVETLFNGTLAVTGRDQETTGFAWWAGNARLINLSGKLLGAHVAHAGLIVFWAGAMNLFEVAHFVPEKPMYEQGLILLPHLATLGWGVGPGGEVTDTFPYFVSGVLHLISSAVLGFGGIYHALLGPETLEESFPFFGYVWKDRNKMTTILGIHLILLGLGAFLLVFKALYFGGVYDTWAPGGGDVRKITNLTLSPSILFGYLLKSPFGGEGWIVSVDDLEDIIGGHVWLGSICILGGIWHILTKPFAWARRALVWSGEAYLSYSLGALSAFGFIACCFVCFNNTAYPSEFYGPTGPEASQAQAFTFLVRDQRLGANVGSAQGPTGLGKYLMRSPTGEVIFGGETMRFWDLRAPWLEPLRGPNGLDLSRLKKDIQPWQERRSAEYMTHAPLGSLNSVGGVATEINAVNYVSPRSWLATSHFVLGFFFFVGHLWHAGRARAAAAGFEKGIDRDFEPVLSMTPLN</sequence>
<organism>
    <name type="scientific">Jasminum nudiflorum</name>
    <name type="common">Winter jasmine</name>
    <dbReference type="NCBI Taxonomy" id="126431"/>
    <lineage>
        <taxon>Eukaryota</taxon>
        <taxon>Viridiplantae</taxon>
        <taxon>Streptophyta</taxon>
        <taxon>Embryophyta</taxon>
        <taxon>Tracheophyta</taxon>
        <taxon>Spermatophyta</taxon>
        <taxon>Magnoliopsida</taxon>
        <taxon>eudicotyledons</taxon>
        <taxon>Gunneridae</taxon>
        <taxon>Pentapetalae</taxon>
        <taxon>asterids</taxon>
        <taxon>lamiids</taxon>
        <taxon>Lamiales</taxon>
        <taxon>Oleaceae</taxon>
        <taxon>Jasmineae</taxon>
        <taxon>Jasminum</taxon>
    </lineage>
</organism>
<geneLocation type="chloroplast"/>
<accession>Q06RD5</accession>